<dbReference type="EC" id="2.1.-.-" evidence="1"/>
<dbReference type="EMBL" id="AE006468">
    <property type="protein sequence ID" value="AAL20079.1"/>
    <property type="molecule type" value="Genomic_DNA"/>
</dbReference>
<dbReference type="RefSeq" id="NP_460120.1">
    <property type="nucleotide sequence ID" value="NC_003197.2"/>
</dbReference>
<dbReference type="RefSeq" id="WP_000100055.1">
    <property type="nucleotide sequence ID" value="NC_003197.2"/>
</dbReference>
<dbReference type="STRING" id="99287.STM1149"/>
<dbReference type="PaxDb" id="99287-STM1149"/>
<dbReference type="GeneID" id="1252667"/>
<dbReference type="KEGG" id="stm:STM1149"/>
<dbReference type="PATRIC" id="fig|99287.12.peg.1216"/>
<dbReference type="HOGENOM" id="CLU_036182_2_0_6"/>
<dbReference type="OMA" id="AEWLQWP"/>
<dbReference type="PhylomeDB" id="Q8ZQ27"/>
<dbReference type="BioCyc" id="SENT99287:STM1149-MONOMER"/>
<dbReference type="UniPathway" id="UPA00637"/>
<dbReference type="Proteomes" id="UP000001014">
    <property type="component" value="Chromosome"/>
</dbReference>
<dbReference type="GO" id="GO:0005886">
    <property type="term" value="C:plasma membrane"/>
    <property type="evidence" value="ECO:0007669"/>
    <property type="project" value="UniProtKB-SubCell"/>
</dbReference>
<dbReference type="GO" id="GO:0016747">
    <property type="term" value="F:acyltransferase activity, transferring groups other than amino-acyl groups"/>
    <property type="evidence" value="ECO:0007669"/>
    <property type="project" value="InterPro"/>
</dbReference>
<dbReference type="GO" id="GO:0016741">
    <property type="term" value="F:transferase activity, transferring one-carbon groups"/>
    <property type="evidence" value="ECO:0007669"/>
    <property type="project" value="UniProtKB-UniRule"/>
</dbReference>
<dbReference type="GO" id="GO:0009250">
    <property type="term" value="P:glucan biosynthetic process"/>
    <property type="evidence" value="ECO:0007669"/>
    <property type="project" value="UniProtKB-UniRule"/>
</dbReference>
<dbReference type="HAMAP" id="MF_01066">
    <property type="entry name" value="MdoC_OpgC"/>
    <property type="match status" value="1"/>
</dbReference>
<dbReference type="InterPro" id="IPR002656">
    <property type="entry name" value="Acyl_transf_3_dom"/>
</dbReference>
<dbReference type="InterPro" id="IPR050623">
    <property type="entry name" value="Glucan_succinyl_AcylTrfase"/>
</dbReference>
<dbReference type="InterPro" id="IPR023723">
    <property type="entry name" value="Glucans_biosynth_C"/>
</dbReference>
<dbReference type="NCBIfam" id="NF003014">
    <property type="entry name" value="PRK03854.1"/>
    <property type="match status" value="1"/>
</dbReference>
<dbReference type="PANTHER" id="PTHR36927">
    <property type="entry name" value="BLR4337 PROTEIN"/>
    <property type="match status" value="1"/>
</dbReference>
<dbReference type="PANTHER" id="PTHR36927:SF3">
    <property type="entry name" value="GLUCANS BIOSYNTHESIS PROTEIN C"/>
    <property type="match status" value="1"/>
</dbReference>
<dbReference type="Pfam" id="PF01757">
    <property type="entry name" value="Acyl_transf_3"/>
    <property type="match status" value="1"/>
</dbReference>
<evidence type="ECO:0000255" key="1">
    <source>
        <dbReference type="HAMAP-Rule" id="MF_01066"/>
    </source>
</evidence>
<keyword id="KW-0012">Acyltransferase</keyword>
<keyword id="KW-1003">Cell membrane</keyword>
<keyword id="KW-0472">Membrane</keyword>
<keyword id="KW-1185">Reference proteome</keyword>
<keyword id="KW-0808">Transferase</keyword>
<keyword id="KW-0812">Transmembrane</keyword>
<keyword id="KW-1133">Transmembrane helix</keyword>
<sequence>MSSVPAPREYFLDSIRAWLMLLGIPFHISLIYSTHSWHVNSAAPSWWLTLFNDFIHAFRMQVFFVISGYFSYMLFLRYPLKHWWKVRVERVGIPMLTAIPLLTLPQFILLQYVKEKTENWPTLSAYEKYNTLAWELISHLWFLLVLVILTTVSIGIFTWFQKRQETSKPRPAAISLAKLSLIFFLLGVAYAAIRRIIFIVYPAILSDGMFNFIVMQTLFYVPFFILGALAFIHPDLKARFTTPSRGCTLGAAVAFIAYLLNQRYGSGDAWMYETESVITMVMGLWMVNVVFSLGHRLLNFQSARVTYFVNASLFIYLVHHPLTLFFGAYITPHISSNLIGFLCGLIFVMGIALILYEIHLRIPLLKFLFSGKPPVKRESRATIG</sequence>
<feature type="chain" id="PRO_0000218055" description="Glucans biosynthesis protein C">
    <location>
        <begin position="1"/>
        <end position="384"/>
    </location>
</feature>
<feature type="transmembrane region" description="Helical" evidence="1">
    <location>
        <begin position="17"/>
        <end position="37"/>
    </location>
</feature>
<feature type="transmembrane region" description="Helical" evidence="1">
    <location>
        <begin position="54"/>
        <end position="74"/>
    </location>
</feature>
<feature type="transmembrane region" description="Helical" evidence="1">
    <location>
        <begin position="91"/>
        <end position="111"/>
    </location>
</feature>
<feature type="transmembrane region" description="Helical" evidence="1">
    <location>
        <begin position="140"/>
        <end position="160"/>
    </location>
</feature>
<feature type="transmembrane region" description="Helical" evidence="1">
    <location>
        <begin position="173"/>
        <end position="193"/>
    </location>
</feature>
<feature type="transmembrane region" description="Helical" evidence="1">
    <location>
        <begin position="212"/>
        <end position="232"/>
    </location>
</feature>
<feature type="transmembrane region" description="Helical" evidence="1">
    <location>
        <begin position="240"/>
        <end position="260"/>
    </location>
</feature>
<feature type="transmembrane region" description="Helical" evidence="1">
    <location>
        <begin position="274"/>
        <end position="294"/>
    </location>
</feature>
<feature type="transmembrane region" description="Helical" evidence="1">
    <location>
        <begin position="311"/>
        <end position="331"/>
    </location>
</feature>
<feature type="transmembrane region" description="Helical" evidence="1">
    <location>
        <begin position="338"/>
        <end position="358"/>
    </location>
</feature>
<gene>
    <name evidence="1" type="primary">mdoC</name>
    <name evidence="1" type="synonym">opgC</name>
    <name type="ordered locus">STM1149</name>
</gene>
<reference key="1">
    <citation type="journal article" date="2001" name="Nature">
        <title>Complete genome sequence of Salmonella enterica serovar Typhimurium LT2.</title>
        <authorList>
            <person name="McClelland M."/>
            <person name="Sanderson K.E."/>
            <person name="Spieth J."/>
            <person name="Clifton S.W."/>
            <person name="Latreille P."/>
            <person name="Courtney L."/>
            <person name="Porwollik S."/>
            <person name="Ali J."/>
            <person name="Dante M."/>
            <person name="Du F."/>
            <person name="Hou S."/>
            <person name="Layman D."/>
            <person name="Leonard S."/>
            <person name="Nguyen C."/>
            <person name="Scott K."/>
            <person name="Holmes A."/>
            <person name="Grewal N."/>
            <person name="Mulvaney E."/>
            <person name="Ryan E."/>
            <person name="Sun H."/>
            <person name="Florea L."/>
            <person name="Miller W."/>
            <person name="Stoneking T."/>
            <person name="Nhan M."/>
            <person name="Waterston R."/>
            <person name="Wilson R.K."/>
        </authorList>
    </citation>
    <scope>NUCLEOTIDE SEQUENCE [LARGE SCALE GENOMIC DNA]</scope>
    <source>
        <strain>LT2 / SGSC1412 / ATCC 700720</strain>
    </source>
</reference>
<proteinExistence type="inferred from homology"/>
<protein>
    <recommendedName>
        <fullName evidence="1">Glucans biosynthesis protein C</fullName>
        <ecNumber evidence="1">2.1.-.-</ecNumber>
    </recommendedName>
</protein>
<accession>Q8ZQ27</accession>
<comment type="function">
    <text evidence="1">Necessary for the succinyl substitution of periplasmic glucans. Could catalyze the transfer of succinyl residues from the cytoplasmic side of the membrane to the nascent glucan backbones on the periplasmic side of the membrane.</text>
</comment>
<comment type="pathway">
    <text evidence="1">Glycan metabolism; osmoregulated periplasmic glucan (OPG) biosynthesis.</text>
</comment>
<comment type="subcellular location">
    <subcellularLocation>
        <location evidence="1">Cell membrane</location>
        <topology evidence="1">Multi-pass membrane protein</topology>
    </subcellularLocation>
</comment>
<comment type="similarity">
    <text evidence="1">Belongs to the acyltransferase 3 family. OpgC subfamily.</text>
</comment>
<name>OPGC_SALTY</name>
<organism>
    <name type="scientific">Salmonella typhimurium (strain LT2 / SGSC1412 / ATCC 700720)</name>
    <dbReference type="NCBI Taxonomy" id="99287"/>
    <lineage>
        <taxon>Bacteria</taxon>
        <taxon>Pseudomonadati</taxon>
        <taxon>Pseudomonadota</taxon>
        <taxon>Gammaproteobacteria</taxon>
        <taxon>Enterobacterales</taxon>
        <taxon>Enterobacteriaceae</taxon>
        <taxon>Salmonella</taxon>
    </lineage>
</organism>